<name>SYE_METST</name>
<dbReference type="EC" id="6.1.1.17" evidence="1"/>
<dbReference type="EMBL" id="CP000102">
    <property type="protein sequence ID" value="ABC57311.1"/>
    <property type="molecule type" value="Genomic_DNA"/>
</dbReference>
<dbReference type="RefSeq" id="WP_011406510.1">
    <property type="nucleotide sequence ID" value="NC_007681.1"/>
</dbReference>
<dbReference type="SMR" id="Q2NFU2"/>
<dbReference type="STRING" id="339860.Msp_0923"/>
<dbReference type="KEGG" id="mst:Msp_0923"/>
<dbReference type="eggNOG" id="arCOG04302">
    <property type="taxonomic scope" value="Archaea"/>
</dbReference>
<dbReference type="HOGENOM" id="CLU_001882_1_3_2"/>
<dbReference type="OrthoDB" id="10470at2157"/>
<dbReference type="Proteomes" id="UP000001931">
    <property type="component" value="Chromosome"/>
</dbReference>
<dbReference type="GO" id="GO:0005829">
    <property type="term" value="C:cytosol"/>
    <property type="evidence" value="ECO:0007669"/>
    <property type="project" value="TreeGrafter"/>
</dbReference>
<dbReference type="GO" id="GO:0032991">
    <property type="term" value="C:protein-containing complex"/>
    <property type="evidence" value="ECO:0007669"/>
    <property type="project" value="UniProtKB-ARBA"/>
</dbReference>
<dbReference type="GO" id="GO:0005524">
    <property type="term" value="F:ATP binding"/>
    <property type="evidence" value="ECO:0007669"/>
    <property type="project" value="UniProtKB-UniRule"/>
</dbReference>
<dbReference type="GO" id="GO:0004818">
    <property type="term" value="F:glutamate-tRNA ligase activity"/>
    <property type="evidence" value="ECO:0007669"/>
    <property type="project" value="UniProtKB-UniRule"/>
</dbReference>
<dbReference type="GO" id="GO:0043604">
    <property type="term" value="P:amide biosynthetic process"/>
    <property type="evidence" value="ECO:0007669"/>
    <property type="project" value="TreeGrafter"/>
</dbReference>
<dbReference type="GO" id="GO:0006424">
    <property type="term" value="P:glutamyl-tRNA aminoacylation"/>
    <property type="evidence" value="ECO:0007669"/>
    <property type="project" value="UniProtKB-UniRule"/>
</dbReference>
<dbReference type="CDD" id="cd09287">
    <property type="entry name" value="GluRS_non_core"/>
    <property type="match status" value="1"/>
</dbReference>
<dbReference type="Gene3D" id="2.40.240.100">
    <property type="match status" value="1"/>
</dbReference>
<dbReference type="Gene3D" id="3.40.50.620">
    <property type="entry name" value="HUPs"/>
    <property type="match status" value="1"/>
</dbReference>
<dbReference type="Gene3D" id="2.40.240.10">
    <property type="entry name" value="Ribosomal Protein L25, Chain P"/>
    <property type="match status" value="1"/>
</dbReference>
<dbReference type="HAMAP" id="MF_02076">
    <property type="entry name" value="Glu_tRNA_synth_type2"/>
    <property type="match status" value="1"/>
</dbReference>
<dbReference type="InterPro" id="IPR001412">
    <property type="entry name" value="aa-tRNA-synth_I_CS"/>
</dbReference>
<dbReference type="InterPro" id="IPR050132">
    <property type="entry name" value="Gln/Glu-tRNA_Ligase"/>
</dbReference>
<dbReference type="InterPro" id="IPR004526">
    <property type="entry name" value="Glu-tRNA-synth_arc/euk"/>
</dbReference>
<dbReference type="InterPro" id="IPR000924">
    <property type="entry name" value="Glu/Gln-tRNA-synth"/>
</dbReference>
<dbReference type="InterPro" id="IPR020058">
    <property type="entry name" value="Glu/Gln-tRNA-synth_Ib_cat-dom"/>
</dbReference>
<dbReference type="InterPro" id="IPR020059">
    <property type="entry name" value="Glu/Gln-tRNA-synth_Ib_codon-bd"/>
</dbReference>
<dbReference type="InterPro" id="IPR020056">
    <property type="entry name" value="Rbsml_bL25/Gln-tRNA_synth_N"/>
</dbReference>
<dbReference type="InterPro" id="IPR011035">
    <property type="entry name" value="Ribosomal_bL25/Gln-tRNA_synth"/>
</dbReference>
<dbReference type="InterPro" id="IPR014729">
    <property type="entry name" value="Rossmann-like_a/b/a_fold"/>
</dbReference>
<dbReference type="InterPro" id="IPR049437">
    <property type="entry name" value="tRNA-synt_1c_C2"/>
</dbReference>
<dbReference type="NCBIfam" id="TIGR00463">
    <property type="entry name" value="gltX_arch"/>
    <property type="match status" value="1"/>
</dbReference>
<dbReference type="NCBIfam" id="NF003169">
    <property type="entry name" value="PRK04156.1"/>
    <property type="match status" value="1"/>
</dbReference>
<dbReference type="PANTHER" id="PTHR43097:SF5">
    <property type="entry name" value="GLUTAMATE--TRNA LIGASE"/>
    <property type="match status" value="1"/>
</dbReference>
<dbReference type="PANTHER" id="PTHR43097">
    <property type="entry name" value="GLUTAMINE-TRNA LIGASE"/>
    <property type="match status" value="1"/>
</dbReference>
<dbReference type="Pfam" id="PF00749">
    <property type="entry name" value="tRNA-synt_1c"/>
    <property type="match status" value="1"/>
</dbReference>
<dbReference type="Pfam" id="PF03950">
    <property type="entry name" value="tRNA-synt_1c_C"/>
    <property type="match status" value="1"/>
</dbReference>
<dbReference type="Pfam" id="PF20974">
    <property type="entry name" value="tRNA-synt_1c_C2"/>
    <property type="match status" value="1"/>
</dbReference>
<dbReference type="PRINTS" id="PR00987">
    <property type="entry name" value="TRNASYNTHGLU"/>
</dbReference>
<dbReference type="SUPFAM" id="SSF52374">
    <property type="entry name" value="Nucleotidylyl transferase"/>
    <property type="match status" value="1"/>
</dbReference>
<dbReference type="SUPFAM" id="SSF50715">
    <property type="entry name" value="Ribosomal protein L25-like"/>
    <property type="match status" value="1"/>
</dbReference>
<dbReference type="PROSITE" id="PS00178">
    <property type="entry name" value="AA_TRNA_LIGASE_I"/>
    <property type="match status" value="1"/>
</dbReference>
<proteinExistence type="inferred from homology"/>
<protein>
    <recommendedName>
        <fullName evidence="1">Glutamate--tRNA ligase</fullName>
        <ecNumber evidence="1">6.1.1.17</ecNumber>
    </recommendedName>
    <alternativeName>
        <fullName evidence="1">Glutamyl-tRNA synthetase</fullName>
        <shortName evidence="1">GluRS</shortName>
    </alternativeName>
</protein>
<sequence>MDIEETIYKYALTNAIEHGNKCQVGSVIGMVMSKNPEMRKDPKTVSQLAGKLVAKVNNLTPEEQQKEVESLGGLEQHTKKEEKPKGLPELKNTEDKKVTLRFAPNPSGPLHIGHARAAILNKLYQEKYNGKLILRIEDTDPKRVEPDAYDAIPQDIKWLGIEPDEIYTQSDRLEIYYEYAQKAIEIGAAYMCKCDGGEFKKLKDNCQPCPCRSHTIEENMELWNNFENMEEGEAVLRIKTDINHKNPAIRDWVAMRIVNQEHPRLGNKYKIYPMMNFSVTVDDHLMGMTHVLRGKDHLANSEKQTYLYKHFGWDVPEFIHYGRLKMDDVELSTSKAREGIENKTYTGWDDPRLGTIRAIARRGIKKEVLYDLIEEIGTKQADATISWKKIYGLNRNIIEENTNRYFFIPNAVKVDVENLPSSKTNMTVERELHYNKPEKGFRNLTFNGSVYIPEDDYKHAQDKNIPLRLMDLINIKIEEDKVIYDSETLEDAQAQHARIIQWAPVETSISATVVMPDNTHVTGYIECDASNLEVDDMVQLERFGFARVDKINDNEITFYYTHN</sequence>
<accession>Q2NFU2</accession>
<gene>
    <name evidence="1" type="primary">gltX</name>
    <name type="ordered locus">Msp_0923</name>
</gene>
<comment type="function">
    <text evidence="1">Catalyzes the attachment of glutamate to tRNA(Glu) in a two-step reaction: glutamate is first activated by ATP to form Glu-AMP and then transferred to the acceptor end of tRNA(Glu).</text>
</comment>
<comment type="catalytic activity">
    <reaction evidence="1">
        <text>tRNA(Glu) + L-glutamate + ATP = L-glutamyl-tRNA(Glu) + AMP + diphosphate</text>
        <dbReference type="Rhea" id="RHEA:23540"/>
        <dbReference type="Rhea" id="RHEA-COMP:9663"/>
        <dbReference type="Rhea" id="RHEA-COMP:9680"/>
        <dbReference type="ChEBI" id="CHEBI:29985"/>
        <dbReference type="ChEBI" id="CHEBI:30616"/>
        <dbReference type="ChEBI" id="CHEBI:33019"/>
        <dbReference type="ChEBI" id="CHEBI:78442"/>
        <dbReference type="ChEBI" id="CHEBI:78520"/>
        <dbReference type="ChEBI" id="CHEBI:456215"/>
        <dbReference type="EC" id="6.1.1.17"/>
    </reaction>
</comment>
<comment type="subcellular location">
    <subcellularLocation>
        <location evidence="1">Cytoplasm</location>
    </subcellularLocation>
</comment>
<comment type="similarity">
    <text evidence="1">Belongs to the class-I aminoacyl-tRNA synthetase family. Glutamate--tRNA ligase type 2 subfamily.</text>
</comment>
<evidence type="ECO:0000255" key="1">
    <source>
        <dbReference type="HAMAP-Rule" id="MF_02076"/>
    </source>
</evidence>
<evidence type="ECO:0000256" key="2">
    <source>
        <dbReference type="SAM" id="MobiDB-lite"/>
    </source>
</evidence>
<keyword id="KW-0030">Aminoacyl-tRNA synthetase</keyword>
<keyword id="KW-0067">ATP-binding</keyword>
<keyword id="KW-0963">Cytoplasm</keyword>
<keyword id="KW-0436">Ligase</keyword>
<keyword id="KW-0547">Nucleotide-binding</keyword>
<keyword id="KW-0648">Protein biosynthesis</keyword>
<keyword id="KW-1185">Reference proteome</keyword>
<reference key="1">
    <citation type="journal article" date="2006" name="J. Bacteriol.">
        <title>The genome sequence of Methanosphaera stadtmanae reveals why this human intestinal archaeon is restricted to methanol and H2 for methane formation and ATP synthesis.</title>
        <authorList>
            <person name="Fricke W.F."/>
            <person name="Seedorf H."/>
            <person name="Henne A."/>
            <person name="Kruer M."/>
            <person name="Liesegang H."/>
            <person name="Hedderich R."/>
            <person name="Gottschalk G."/>
            <person name="Thauer R.K."/>
        </authorList>
    </citation>
    <scope>NUCLEOTIDE SEQUENCE [LARGE SCALE GENOMIC DNA]</scope>
    <source>
        <strain>ATCC 43021 / DSM 3091 / JCM 11832 / MCB-3</strain>
    </source>
</reference>
<feature type="chain" id="PRO_0000237423" description="Glutamate--tRNA ligase">
    <location>
        <begin position="1"/>
        <end position="563"/>
    </location>
</feature>
<feature type="region of interest" description="Disordered" evidence="2">
    <location>
        <begin position="61"/>
        <end position="94"/>
    </location>
</feature>
<feature type="short sequence motif" description="'HIGH' region" evidence="1">
    <location>
        <begin position="104"/>
        <end position="114"/>
    </location>
</feature>
<feature type="compositionally biased region" description="Basic and acidic residues" evidence="2">
    <location>
        <begin position="76"/>
        <end position="94"/>
    </location>
</feature>
<organism>
    <name type="scientific">Methanosphaera stadtmanae (strain ATCC 43021 / DSM 3091 / JCM 11832 / MCB-3)</name>
    <dbReference type="NCBI Taxonomy" id="339860"/>
    <lineage>
        <taxon>Archaea</taxon>
        <taxon>Methanobacteriati</taxon>
        <taxon>Methanobacteriota</taxon>
        <taxon>Methanomada group</taxon>
        <taxon>Methanobacteria</taxon>
        <taxon>Methanobacteriales</taxon>
        <taxon>Methanobacteriaceae</taxon>
        <taxon>Methanosphaera</taxon>
    </lineage>
</organism>